<name>COAE_STAAS</name>
<accession>Q6G8N8</accession>
<gene>
    <name evidence="1" type="primary">coaE</name>
    <name type="ordered locus">SAS1616</name>
</gene>
<evidence type="ECO:0000255" key="1">
    <source>
        <dbReference type="HAMAP-Rule" id="MF_00376"/>
    </source>
</evidence>
<proteinExistence type="inferred from homology"/>
<organism>
    <name type="scientific">Staphylococcus aureus (strain MSSA476)</name>
    <dbReference type="NCBI Taxonomy" id="282459"/>
    <lineage>
        <taxon>Bacteria</taxon>
        <taxon>Bacillati</taxon>
        <taxon>Bacillota</taxon>
        <taxon>Bacilli</taxon>
        <taxon>Bacillales</taxon>
        <taxon>Staphylococcaceae</taxon>
        <taxon>Staphylococcus</taxon>
    </lineage>
</organism>
<feature type="chain" id="PRO_0000173001" description="Dephospho-CoA kinase">
    <location>
        <begin position="1"/>
        <end position="207"/>
    </location>
</feature>
<feature type="domain" description="DPCK" evidence="1">
    <location>
        <begin position="4"/>
        <end position="203"/>
    </location>
</feature>
<feature type="binding site" evidence="1">
    <location>
        <begin position="12"/>
        <end position="17"/>
    </location>
    <ligand>
        <name>ATP</name>
        <dbReference type="ChEBI" id="CHEBI:30616"/>
    </ligand>
</feature>
<reference key="1">
    <citation type="journal article" date="2004" name="Proc. Natl. Acad. Sci. U.S.A.">
        <title>Complete genomes of two clinical Staphylococcus aureus strains: evidence for the rapid evolution of virulence and drug resistance.</title>
        <authorList>
            <person name="Holden M.T.G."/>
            <person name="Feil E.J."/>
            <person name="Lindsay J.A."/>
            <person name="Peacock S.J."/>
            <person name="Day N.P.J."/>
            <person name="Enright M.C."/>
            <person name="Foster T.J."/>
            <person name="Moore C.E."/>
            <person name="Hurst L."/>
            <person name="Atkin R."/>
            <person name="Barron A."/>
            <person name="Bason N."/>
            <person name="Bentley S.D."/>
            <person name="Chillingworth C."/>
            <person name="Chillingworth T."/>
            <person name="Churcher C."/>
            <person name="Clark L."/>
            <person name="Corton C."/>
            <person name="Cronin A."/>
            <person name="Doggett J."/>
            <person name="Dowd L."/>
            <person name="Feltwell T."/>
            <person name="Hance Z."/>
            <person name="Harris B."/>
            <person name="Hauser H."/>
            <person name="Holroyd S."/>
            <person name="Jagels K."/>
            <person name="James K.D."/>
            <person name="Lennard N."/>
            <person name="Line A."/>
            <person name="Mayes R."/>
            <person name="Moule S."/>
            <person name="Mungall K."/>
            <person name="Ormond D."/>
            <person name="Quail M.A."/>
            <person name="Rabbinowitsch E."/>
            <person name="Rutherford K.M."/>
            <person name="Sanders M."/>
            <person name="Sharp S."/>
            <person name="Simmonds M."/>
            <person name="Stevens K."/>
            <person name="Whitehead S."/>
            <person name="Barrell B.G."/>
            <person name="Spratt B.G."/>
            <person name="Parkhill J."/>
        </authorList>
    </citation>
    <scope>NUCLEOTIDE SEQUENCE [LARGE SCALE GENOMIC DNA]</scope>
    <source>
        <strain>MSSA476</strain>
    </source>
</reference>
<comment type="function">
    <text evidence="1">Catalyzes the phosphorylation of the 3'-hydroxyl group of dephosphocoenzyme A to form coenzyme A.</text>
</comment>
<comment type="catalytic activity">
    <reaction evidence="1">
        <text>3'-dephospho-CoA + ATP = ADP + CoA + H(+)</text>
        <dbReference type="Rhea" id="RHEA:18245"/>
        <dbReference type="ChEBI" id="CHEBI:15378"/>
        <dbReference type="ChEBI" id="CHEBI:30616"/>
        <dbReference type="ChEBI" id="CHEBI:57287"/>
        <dbReference type="ChEBI" id="CHEBI:57328"/>
        <dbReference type="ChEBI" id="CHEBI:456216"/>
        <dbReference type="EC" id="2.7.1.24"/>
    </reaction>
</comment>
<comment type="pathway">
    <text evidence="1">Cofactor biosynthesis; coenzyme A biosynthesis; CoA from (R)-pantothenate: step 5/5.</text>
</comment>
<comment type="subcellular location">
    <subcellularLocation>
        <location evidence="1">Cytoplasm</location>
    </subcellularLocation>
</comment>
<comment type="similarity">
    <text evidence="1">Belongs to the CoaE family.</text>
</comment>
<keyword id="KW-0067">ATP-binding</keyword>
<keyword id="KW-0173">Coenzyme A biosynthesis</keyword>
<keyword id="KW-0963">Cytoplasm</keyword>
<keyword id="KW-0418">Kinase</keyword>
<keyword id="KW-0547">Nucleotide-binding</keyword>
<keyword id="KW-0808">Transferase</keyword>
<dbReference type="EC" id="2.7.1.24" evidence="1"/>
<dbReference type="EMBL" id="BX571857">
    <property type="protein sequence ID" value="CAG43418.1"/>
    <property type="molecule type" value="Genomic_DNA"/>
</dbReference>
<dbReference type="RefSeq" id="WP_001127167.1">
    <property type="nucleotide sequence ID" value="NC_002953.3"/>
</dbReference>
<dbReference type="SMR" id="Q6G8N8"/>
<dbReference type="KEGG" id="sas:SAS1616"/>
<dbReference type="HOGENOM" id="CLU_057180_0_0_9"/>
<dbReference type="UniPathway" id="UPA00241">
    <property type="reaction ID" value="UER00356"/>
</dbReference>
<dbReference type="GO" id="GO:0005737">
    <property type="term" value="C:cytoplasm"/>
    <property type="evidence" value="ECO:0007669"/>
    <property type="project" value="UniProtKB-SubCell"/>
</dbReference>
<dbReference type="GO" id="GO:0005524">
    <property type="term" value="F:ATP binding"/>
    <property type="evidence" value="ECO:0007669"/>
    <property type="project" value="UniProtKB-UniRule"/>
</dbReference>
<dbReference type="GO" id="GO:0004140">
    <property type="term" value="F:dephospho-CoA kinase activity"/>
    <property type="evidence" value="ECO:0007669"/>
    <property type="project" value="UniProtKB-UniRule"/>
</dbReference>
<dbReference type="GO" id="GO:0015937">
    <property type="term" value="P:coenzyme A biosynthetic process"/>
    <property type="evidence" value="ECO:0007669"/>
    <property type="project" value="UniProtKB-UniRule"/>
</dbReference>
<dbReference type="CDD" id="cd02022">
    <property type="entry name" value="DPCK"/>
    <property type="match status" value="1"/>
</dbReference>
<dbReference type="FunFam" id="3.40.50.300:FF:000991">
    <property type="entry name" value="Dephospho-CoA kinase"/>
    <property type="match status" value="1"/>
</dbReference>
<dbReference type="Gene3D" id="3.40.50.300">
    <property type="entry name" value="P-loop containing nucleotide triphosphate hydrolases"/>
    <property type="match status" value="1"/>
</dbReference>
<dbReference type="HAMAP" id="MF_00376">
    <property type="entry name" value="Dephospho_CoA_kinase"/>
    <property type="match status" value="1"/>
</dbReference>
<dbReference type="InterPro" id="IPR001977">
    <property type="entry name" value="Depp_CoAkinase"/>
</dbReference>
<dbReference type="InterPro" id="IPR027417">
    <property type="entry name" value="P-loop_NTPase"/>
</dbReference>
<dbReference type="NCBIfam" id="TIGR00152">
    <property type="entry name" value="dephospho-CoA kinase"/>
    <property type="match status" value="1"/>
</dbReference>
<dbReference type="PANTHER" id="PTHR10695:SF46">
    <property type="entry name" value="BIFUNCTIONAL COENZYME A SYNTHASE-RELATED"/>
    <property type="match status" value="1"/>
</dbReference>
<dbReference type="PANTHER" id="PTHR10695">
    <property type="entry name" value="DEPHOSPHO-COA KINASE-RELATED"/>
    <property type="match status" value="1"/>
</dbReference>
<dbReference type="Pfam" id="PF01121">
    <property type="entry name" value="CoaE"/>
    <property type="match status" value="1"/>
</dbReference>
<dbReference type="SUPFAM" id="SSF52540">
    <property type="entry name" value="P-loop containing nucleoside triphosphate hydrolases"/>
    <property type="match status" value="1"/>
</dbReference>
<dbReference type="PROSITE" id="PS51219">
    <property type="entry name" value="DPCK"/>
    <property type="match status" value="1"/>
</dbReference>
<sequence>MPKVIGLTGGIASGKSTVSELLSVFGFKVVDADKAAREAVKKGSKGLAQVREVFGDEAIDENGEMNRRYMGDLVFNHPEKRLELNAIIHPIVRDIMEEEKQEYLKQGYNVIMDIPLLFENELENTVDEVWVVYTSESIQMDRLMQRNNLSLEDAKARVYSQISIDKKSRMADHVIDNLGDKLELKQNLERLLEEEGYIEKPNYGEED</sequence>
<protein>
    <recommendedName>
        <fullName evidence="1">Dephospho-CoA kinase</fullName>
        <ecNumber evidence="1">2.7.1.24</ecNumber>
    </recommendedName>
    <alternativeName>
        <fullName evidence="1">Dephosphocoenzyme A kinase</fullName>
    </alternativeName>
</protein>